<dbReference type="EMBL" id="LT708304">
    <property type="protein sequence ID" value="SIU01006.1"/>
    <property type="molecule type" value="Genomic_DNA"/>
</dbReference>
<dbReference type="RefSeq" id="NP_856043.1">
    <property type="nucleotide sequence ID" value="NC_002945.3"/>
</dbReference>
<dbReference type="SMR" id="P63967"/>
<dbReference type="KEGG" id="mbo:BQ2027_MB2394C"/>
<dbReference type="PATRIC" id="fig|233413.5.peg.2631"/>
<dbReference type="Proteomes" id="UP000001419">
    <property type="component" value="Chromosome"/>
</dbReference>
<dbReference type="GO" id="GO:0005737">
    <property type="term" value="C:cytoplasm"/>
    <property type="evidence" value="ECO:0007669"/>
    <property type="project" value="UniProtKB-SubCell"/>
</dbReference>
<dbReference type="GO" id="GO:0005524">
    <property type="term" value="F:ATP binding"/>
    <property type="evidence" value="ECO:0007669"/>
    <property type="project" value="InterPro"/>
</dbReference>
<dbReference type="GO" id="GO:0031072">
    <property type="term" value="F:heat shock protein binding"/>
    <property type="evidence" value="ECO:0007669"/>
    <property type="project" value="InterPro"/>
</dbReference>
<dbReference type="GO" id="GO:0051082">
    <property type="term" value="F:unfolded protein binding"/>
    <property type="evidence" value="ECO:0007669"/>
    <property type="project" value="UniProtKB-UniRule"/>
</dbReference>
<dbReference type="GO" id="GO:0008270">
    <property type="term" value="F:zinc ion binding"/>
    <property type="evidence" value="ECO:0007669"/>
    <property type="project" value="UniProtKB-UniRule"/>
</dbReference>
<dbReference type="GO" id="GO:0051085">
    <property type="term" value="P:chaperone cofactor-dependent protein refolding"/>
    <property type="evidence" value="ECO:0007669"/>
    <property type="project" value="TreeGrafter"/>
</dbReference>
<dbReference type="GO" id="GO:0006260">
    <property type="term" value="P:DNA replication"/>
    <property type="evidence" value="ECO:0007669"/>
    <property type="project" value="UniProtKB-KW"/>
</dbReference>
<dbReference type="GO" id="GO:0042026">
    <property type="term" value="P:protein refolding"/>
    <property type="evidence" value="ECO:0007669"/>
    <property type="project" value="TreeGrafter"/>
</dbReference>
<dbReference type="GO" id="GO:0009408">
    <property type="term" value="P:response to heat"/>
    <property type="evidence" value="ECO:0007669"/>
    <property type="project" value="InterPro"/>
</dbReference>
<dbReference type="CDD" id="cd06257">
    <property type="entry name" value="DnaJ"/>
    <property type="match status" value="1"/>
</dbReference>
<dbReference type="CDD" id="cd10747">
    <property type="entry name" value="DnaJ_C"/>
    <property type="match status" value="1"/>
</dbReference>
<dbReference type="CDD" id="cd10719">
    <property type="entry name" value="DnaJ_zf"/>
    <property type="match status" value="1"/>
</dbReference>
<dbReference type="FunFam" id="2.60.260.20:FF:000005">
    <property type="entry name" value="Chaperone protein dnaJ 1, mitochondrial"/>
    <property type="match status" value="1"/>
</dbReference>
<dbReference type="FunFam" id="2.10.230.10:FF:000002">
    <property type="entry name" value="Molecular chaperone DnaJ"/>
    <property type="match status" value="1"/>
</dbReference>
<dbReference type="Gene3D" id="6.20.20.10">
    <property type="match status" value="2"/>
</dbReference>
<dbReference type="Gene3D" id="1.10.287.110">
    <property type="entry name" value="DnaJ domain"/>
    <property type="match status" value="1"/>
</dbReference>
<dbReference type="Gene3D" id="2.60.260.20">
    <property type="entry name" value="Urease metallochaperone UreE, N-terminal domain"/>
    <property type="match status" value="2"/>
</dbReference>
<dbReference type="HAMAP" id="MF_01152">
    <property type="entry name" value="DnaJ"/>
    <property type="match status" value="1"/>
</dbReference>
<dbReference type="InterPro" id="IPR012724">
    <property type="entry name" value="DnaJ"/>
</dbReference>
<dbReference type="InterPro" id="IPR002939">
    <property type="entry name" value="DnaJ_C"/>
</dbReference>
<dbReference type="InterPro" id="IPR001623">
    <property type="entry name" value="DnaJ_domain"/>
</dbReference>
<dbReference type="InterPro" id="IPR008971">
    <property type="entry name" value="HSP40/DnaJ_pept-bd"/>
</dbReference>
<dbReference type="InterPro" id="IPR001305">
    <property type="entry name" value="HSP_DnaJ_Cys-rich_dom"/>
</dbReference>
<dbReference type="InterPro" id="IPR036410">
    <property type="entry name" value="HSP_DnaJ_Cys-rich_dom_sf"/>
</dbReference>
<dbReference type="InterPro" id="IPR036869">
    <property type="entry name" value="J_dom_sf"/>
</dbReference>
<dbReference type="NCBIfam" id="NF008035">
    <property type="entry name" value="PRK10767.1"/>
    <property type="match status" value="1"/>
</dbReference>
<dbReference type="NCBIfam" id="NF010871">
    <property type="entry name" value="PRK14278.1"/>
    <property type="match status" value="1"/>
</dbReference>
<dbReference type="PANTHER" id="PTHR43096:SF48">
    <property type="entry name" value="CHAPERONE PROTEIN DNAJ"/>
    <property type="match status" value="1"/>
</dbReference>
<dbReference type="PANTHER" id="PTHR43096">
    <property type="entry name" value="DNAJ HOMOLOG 1, MITOCHONDRIAL-RELATED"/>
    <property type="match status" value="1"/>
</dbReference>
<dbReference type="Pfam" id="PF00226">
    <property type="entry name" value="DnaJ"/>
    <property type="match status" value="1"/>
</dbReference>
<dbReference type="Pfam" id="PF01556">
    <property type="entry name" value="DnaJ_C"/>
    <property type="match status" value="1"/>
</dbReference>
<dbReference type="Pfam" id="PF00684">
    <property type="entry name" value="DnaJ_CXXCXGXG"/>
    <property type="match status" value="1"/>
</dbReference>
<dbReference type="PRINTS" id="PR00625">
    <property type="entry name" value="JDOMAIN"/>
</dbReference>
<dbReference type="SMART" id="SM00271">
    <property type="entry name" value="DnaJ"/>
    <property type="match status" value="1"/>
</dbReference>
<dbReference type="SUPFAM" id="SSF46565">
    <property type="entry name" value="Chaperone J-domain"/>
    <property type="match status" value="1"/>
</dbReference>
<dbReference type="SUPFAM" id="SSF57938">
    <property type="entry name" value="DnaJ/Hsp40 cysteine-rich domain"/>
    <property type="match status" value="1"/>
</dbReference>
<dbReference type="SUPFAM" id="SSF49493">
    <property type="entry name" value="HSP40/DnaJ peptide-binding domain"/>
    <property type="match status" value="2"/>
</dbReference>
<dbReference type="PROSITE" id="PS50076">
    <property type="entry name" value="DNAJ_2"/>
    <property type="match status" value="1"/>
</dbReference>
<dbReference type="PROSITE" id="PS51188">
    <property type="entry name" value="ZF_CR"/>
    <property type="match status" value="1"/>
</dbReference>
<feature type="chain" id="PRO_0000070821" description="Chaperone protein DnaJ 2">
    <location>
        <begin position="1"/>
        <end position="382"/>
    </location>
</feature>
<feature type="domain" description="J" evidence="1">
    <location>
        <begin position="4"/>
        <end position="68"/>
    </location>
</feature>
<feature type="repeat" description="CXXCXGXG motif">
    <location>
        <begin position="145"/>
        <end position="152"/>
    </location>
</feature>
<feature type="repeat" description="CXXCXGXG motif">
    <location>
        <begin position="162"/>
        <end position="169"/>
    </location>
</feature>
<feature type="repeat" description="CXXCXGXG motif">
    <location>
        <begin position="188"/>
        <end position="195"/>
    </location>
</feature>
<feature type="repeat" description="CXXCXGXG motif">
    <location>
        <begin position="202"/>
        <end position="209"/>
    </location>
</feature>
<feature type="zinc finger region" description="CR-type" evidence="1">
    <location>
        <begin position="132"/>
        <end position="214"/>
    </location>
</feature>
<feature type="binding site" evidence="1">
    <location>
        <position position="145"/>
    </location>
    <ligand>
        <name>Zn(2+)</name>
        <dbReference type="ChEBI" id="CHEBI:29105"/>
        <label>1</label>
    </ligand>
</feature>
<feature type="binding site" evidence="1">
    <location>
        <position position="148"/>
    </location>
    <ligand>
        <name>Zn(2+)</name>
        <dbReference type="ChEBI" id="CHEBI:29105"/>
        <label>1</label>
    </ligand>
</feature>
<feature type="binding site" evidence="1">
    <location>
        <position position="162"/>
    </location>
    <ligand>
        <name>Zn(2+)</name>
        <dbReference type="ChEBI" id="CHEBI:29105"/>
        <label>2</label>
    </ligand>
</feature>
<feature type="binding site" evidence="1">
    <location>
        <position position="165"/>
    </location>
    <ligand>
        <name>Zn(2+)</name>
        <dbReference type="ChEBI" id="CHEBI:29105"/>
        <label>2</label>
    </ligand>
</feature>
<feature type="binding site" evidence="1">
    <location>
        <position position="188"/>
    </location>
    <ligand>
        <name>Zn(2+)</name>
        <dbReference type="ChEBI" id="CHEBI:29105"/>
        <label>2</label>
    </ligand>
</feature>
<feature type="binding site" evidence="1">
    <location>
        <position position="191"/>
    </location>
    <ligand>
        <name>Zn(2+)</name>
        <dbReference type="ChEBI" id="CHEBI:29105"/>
        <label>2</label>
    </ligand>
</feature>
<feature type="binding site" evidence="1">
    <location>
        <position position="202"/>
    </location>
    <ligand>
        <name>Zn(2+)</name>
        <dbReference type="ChEBI" id="CHEBI:29105"/>
        <label>1</label>
    </ligand>
</feature>
<feature type="binding site" evidence="1">
    <location>
        <position position="205"/>
    </location>
    <ligand>
        <name>Zn(2+)</name>
        <dbReference type="ChEBI" id="CHEBI:29105"/>
        <label>1</label>
    </ligand>
</feature>
<protein>
    <recommendedName>
        <fullName evidence="1">Chaperone protein DnaJ 2</fullName>
    </recommendedName>
</protein>
<keyword id="KW-0143">Chaperone</keyword>
<keyword id="KW-0963">Cytoplasm</keyword>
<keyword id="KW-0235">DNA replication</keyword>
<keyword id="KW-0479">Metal-binding</keyword>
<keyword id="KW-1185">Reference proteome</keyword>
<keyword id="KW-0677">Repeat</keyword>
<keyword id="KW-0346">Stress response</keyword>
<keyword id="KW-0862">Zinc</keyword>
<keyword id="KW-0863">Zinc-finger</keyword>
<name>DNAJ2_MYCBO</name>
<comment type="function">
    <text evidence="1">Participates actively in the response to hyperosmotic and heat shock by preventing the aggregation of stress-denatured proteins and by disaggregating proteins, also in an autonomous, DnaK-independent fashion. Unfolded proteins bind initially to DnaJ; upon interaction with the DnaJ-bound protein, DnaK hydrolyzes its bound ATP, resulting in the formation of a stable complex. GrpE releases ADP from DnaK; ATP binding to DnaK triggers the release of the substrate protein, thus completing the reaction cycle. Several rounds of ATP-dependent interactions between DnaJ, DnaK and GrpE are required for fully efficient folding. Also involved, together with DnaK and GrpE, in the DNA replication of plasmids through activation of initiation proteins.</text>
</comment>
<comment type="cofactor">
    <cofactor evidence="1">
        <name>Zn(2+)</name>
        <dbReference type="ChEBI" id="CHEBI:29105"/>
    </cofactor>
    <text evidence="1">Binds 2 Zn(2+) ions per monomer.</text>
</comment>
<comment type="subunit">
    <text evidence="1">Homodimer.</text>
</comment>
<comment type="subcellular location">
    <subcellularLocation>
        <location evidence="1">Cytoplasm</location>
    </subcellularLocation>
</comment>
<comment type="domain">
    <text evidence="1">The J domain is necessary and sufficient to stimulate DnaK ATPase activity. Zinc center 1 plays an important role in the autonomous, DnaK-independent chaperone activity of DnaJ. Zinc center 2 is essential for interaction with DnaK and for DnaJ activity.</text>
</comment>
<comment type="similarity">
    <text evidence="1">Belongs to the DnaJ family.</text>
</comment>
<sequence>MARDYYGLLGVSKNASDADIKRAYRKLARELHPDVNPDEAAQAKFKEISVAYEVLSDPDKRRIVDLGGDPLESAAAGGNGFGGFGGLGDVFEAFFGGGFGGGAASRGPIGRVRPGSDSLLRMRLDLEECATGVTKQVTVDTAVLCDRCQGKGTNGDSVPIPCDTCGGRGEVQTVQRSLLGQMLTSRPCPTCRGVGVVIPDPCQQCMGDGRIRARREISVKIPAGVGDGMRVRLAAQGEVGPGGGPAGDLYVEVHEQAHDVFVREGDHLHCTVSVPMVDAALGVTVTVDAILDGLSEITIPPGTQPGSVITLRGRGMPHLRSNTRGDLHVHVEVVVPTRLDHQDIELLRELKGRRDREVAEVRSTHAAAGGLFSRLRETFTGR</sequence>
<proteinExistence type="inferred from homology"/>
<reference key="1">
    <citation type="journal article" date="2003" name="Proc. Natl. Acad. Sci. U.S.A.">
        <title>The complete genome sequence of Mycobacterium bovis.</title>
        <authorList>
            <person name="Garnier T."/>
            <person name="Eiglmeier K."/>
            <person name="Camus J.-C."/>
            <person name="Medina N."/>
            <person name="Mansoor H."/>
            <person name="Pryor M."/>
            <person name="Duthoy S."/>
            <person name="Grondin S."/>
            <person name="Lacroix C."/>
            <person name="Monsempe C."/>
            <person name="Simon S."/>
            <person name="Harris B."/>
            <person name="Atkin R."/>
            <person name="Doggett J."/>
            <person name="Mayes R."/>
            <person name="Keating L."/>
            <person name="Wheeler P.R."/>
            <person name="Parkhill J."/>
            <person name="Barrell B.G."/>
            <person name="Cole S.T."/>
            <person name="Gordon S.V."/>
            <person name="Hewinson R.G."/>
        </authorList>
    </citation>
    <scope>NUCLEOTIDE SEQUENCE [LARGE SCALE GENOMIC DNA]</scope>
    <source>
        <strain>ATCC BAA-935 / AF2122/97</strain>
    </source>
</reference>
<reference key="2">
    <citation type="journal article" date="2017" name="Genome Announc.">
        <title>Updated reference genome sequence and annotation of Mycobacterium bovis AF2122/97.</title>
        <authorList>
            <person name="Malone K.M."/>
            <person name="Farrell D."/>
            <person name="Stuber T.P."/>
            <person name="Schubert O.T."/>
            <person name="Aebersold R."/>
            <person name="Robbe-Austerman S."/>
            <person name="Gordon S.V."/>
        </authorList>
    </citation>
    <scope>NUCLEOTIDE SEQUENCE [LARGE SCALE GENOMIC DNA]</scope>
    <scope>GENOME REANNOTATION</scope>
    <source>
        <strain>ATCC BAA-935 / AF2122/97</strain>
    </source>
</reference>
<organism>
    <name type="scientific">Mycobacterium bovis (strain ATCC BAA-935 / AF2122/97)</name>
    <dbReference type="NCBI Taxonomy" id="233413"/>
    <lineage>
        <taxon>Bacteria</taxon>
        <taxon>Bacillati</taxon>
        <taxon>Actinomycetota</taxon>
        <taxon>Actinomycetes</taxon>
        <taxon>Mycobacteriales</taxon>
        <taxon>Mycobacteriaceae</taxon>
        <taxon>Mycobacterium</taxon>
        <taxon>Mycobacterium tuberculosis complex</taxon>
    </lineage>
</organism>
<evidence type="ECO:0000255" key="1">
    <source>
        <dbReference type="HAMAP-Rule" id="MF_01152"/>
    </source>
</evidence>
<accession>P63967</accession>
<accession>A0A1R3Y185</accession>
<accession>O05825</accession>
<accession>X2BKA0</accession>
<gene>
    <name evidence="1" type="primary">dnaJ2</name>
    <name type="ordered locus">BQ2027_MB2394C</name>
</gene>